<feature type="chain" id="PRO_0000145562" description="Glyceraldehyde-3-phosphate dehydrogenase">
    <location>
        <begin position="1"/>
        <end position="337"/>
    </location>
</feature>
<feature type="active site" description="Nucleophile" evidence="2">
    <location>
        <position position="152"/>
    </location>
</feature>
<feature type="binding site" evidence="1">
    <location>
        <begin position="13"/>
        <end position="14"/>
    </location>
    <ligand>
        <name>NAD(+)</name>
        <dbReference type="ChEBI" id="CHEBI:57540"/>
    </ligand>
</feature>
<feature type="binding site" evidence="1">
    <location>
        <position position="35"/>
    </location>
    <ligand>
        <name>NAD(+)</name>
        <dbReference type="ChEBI" id="CHEBI:57540"/>
    </ligand>
</feature>
<feature type="binding site" evidence="1">
    <location>
        <position position="80"/>
    </location>
    <ligand>
        <name>NAD(+)</name>
        <dbReference type="ChEBI" id="CHEBI:57540"/>
    </ligand>
</feature>
<feature type="binding site" evidence="1">
    <location>
        <begin position="151"/>
        <end position="153"/>
    </location>
    <ligand>
        <name>D-glyceraldehyde 3-phosphate</name>
        <dbReference type="ChEBI" id="CHEBI:59776"/>
    </ligand>
</feature>
<feature type="binding site" evidence="1">
    <location>
        <position position="182"/>
    </location>
    <ligand>
        <name>D-glyceraldehyde 3-phosphate</name>
        <dbReference type="ChEBI" id="CHEBI:59776"/>
    </ligand>
</feature>
<feature type="binding site" evidence="1">
    <location>
        <begin position="211"/>
        <end position="212"/>
    </location>
    <ligand>
        <name>D-glyceraldehyde 3-phosphate</name>
        <dbReference type="ChEBI" id="CHEBI:59776"/>
    </ligand>
</feature>
<feature type="binding site" evidence="1">
    <location>
        <position position="234"/>
    </location>
    <ligand>
        <name>D-glyceraldehyde 3-phosphate</name>
        <dbReference type="ChEBI" id="CHEBI:59776"/>
    </ligand>
</feature>
<feature type="binding site" evidence="1">
    <location>
        <position position="316"/>
    </location>
    <ligand>
        <name>NAD(+)</name>
        <dbReference type="ChEBI" id="CHEBI:57540"/>
    </ligand>
</feature>
<feature type="site" description="Activates thiol group during catalysis" evidence="1">
    <location>
        <position position="179"/>
    </location>
</feature>
<accession>P53430</accession>
<protein>
    <recommendedName>
        <fullName>Glyceraldehyde-3-phosphate dehydrogenase</fullName>
        <shortName>GAPDH</shortName>
        <ecNumber>1.2.1.12</ecNumber>
    </recommendedName>
</protein>
<keyword id="KW-0963">Cytoplasm</keyword>
<keyword id="KW-0324">Glycolysis</keyword>
<keyword id="KW-0520">NAD</keyword>
<keyword id="KW-0560">Oxidoreductase</keyword>
<organism>
    <name type="scientific">Monascus purpureus</name>
    <name type="common">Red mold</name>
    <name type="synonym">Monascus anka</name>
    <dbReference type="NCBI Taxonomy" id="5098"/>
    <lineage>
        <taxon>Eukaryota</taxon>
        <taxon>Fungi</taxon>
        <taxon>Dikarya</taxon>
        <taxon>Ascomycota</taxon>
        <taxon>Pezizomycotina</taxon>
        <taxon>Eurotiomycetes</taxon>
        <taxon>Eurotiomycetidae</taxon>
        <taxon>Eurotiales</taxon>
        <taxon>Aspergillaceae</taxon>
        <taxon>Monascus</taxon>
    </lineage>
</organism>
<evidence type="ECO:0000250" key="1"/>
<evidence type="ECO:0000255" key="2">
    <source>
        <dbReference type="PROSITE-ProRule" id="PRU10009"/>
    </source>
</evidence>
<evidence type="ECO:0000305" key="3"/>
<sequence length="337" mass="36402">MVVPKVGINGFGRIGRIVFRNAIEHEGVDIVAVNDPFIEVHYAAYMLKYDSTHGRFNGTVEFDGNTLIVNGKKIKFYAERDPAQIPWSETGAEYVVESTGVFTKQEKASLHLKGGAKKVIISAPSSDSPMFVMGVNNDQYTKDITVLSNASCTTNCLAPLAKVINDKFGIVEGLMTTVHSYTATQKVVDGPSNKDWRGGRTAAQNIIPSSTGAAKAVGKVIPSLNGKLTGMSMRVPTSNVSVVDLTARLEKAATYDEIKQAVKEASEGPLKGVLGYTEDDVVSSDLNGDPHSSIFDAKAGIALNSNFVKLVSWYDNEWGYSRRVIDLIAYIAQVDAQ</sequence>
<name>G3P_MONPU</name>
<proteinExistence type="inferred from homology"/>
<reference key="1">
    <citation type="submission" date="2003-02" db="EMBL/GenBank/DDBJ databases">
        <title>Cloning and characterization of glyceraldehyde-3-phosphate dehydrogenase (gpd1) from Monascus anka IFO4478.</title>
        <authorList>
            <person name="Kim J."/>
            <person name="Choi Y.D."/>
            <person name="Kim S.U."/>
        </authorList>
    </citation>
    <scope>NUCLEOTIDE SEQUENCE [GENOMIC DNA]</scope>
    <source>
        <strain>ATCC 16360 / CBS 283.34 / JCM 6934 / NBRC 4478</strain>
    </source>
</reference>
<gene>
    <name type="primary">GPD1</name>
</gene>
<comment type="catalytic activity">
    <reaction evidence="2">
        <text>D-glyceraldehyde 3-phosphate + phosphate + NAD(+) = (2R)-3-phospho-glyceroyl phosphate + NADH + H(+)</text>
        <dbReference type="Rhea" id="RHEA:10300"/>
        <dbReference type="ChEBI" id="CHEBI:15378"/>
        <dbReference type="ChEBI" id="CHEBI:43474"/>
        <dbReference type="ChEBI" id="CHEBI:57540"/>
        <dbReference type="ChEBI" id="CHEBI:57604"/>
        <dbReference type="ChEBI" id="CHEBI:57945"/>
        <dbReference type="ChEBI" id="CHEBI:59776"/>
        <dbReference type="EC" id="1.2.1.12"/>
    </reaction>
</comment>
<comment type="pathway">
    <text>Carbohydrate degradation; glycolysis; pyruvate from D-glyceraldehyde 3-phosphate: step 1/5.</text>
</comment>
<comment type="subunit">
    <text evidence="1">Homotetramer.</text>
</comment>
<comment type="subcellular location">
    <subcellularLocation>
        <location evidence="1">Cytoplasm</location>
    </subcellularLocation>
</comment>
<comment type="similarity">
    <text evidence="3">Belongs to the glyceraldehyde-3-phosphate dehydrogenase family.</text>
</comment>
<dbReference type="EC" id="1.2.1.12"/>
<dbReference type="EMBL" id="Z68498">
    <property type="protein sequence ID" value="CAA92807.3"/>
    <property type="molecule type" value="Genomic_DNA"/>
</dbReference>
<dbReference type="SMR" id="P53430"/>
<dbReference type="OrthoDB" id="1152826at2759"/>
<dbReference type="UniPathway" id="UPA00109">
    <property type="reaction ID" value="UER00184"/>
</dbReference>
<dbReference type="GO" id="GO:0005829">
    <property type="term" value="C:cytosol"/>
    <property type="evidence" value="ECO:0007669"/>
    <property type="project" value="TreeGrafter"/>
</dbReference>
<dbReference type="GO" id="GO:0004365">
    <property type="term" value="F:glyceraldehyde-3-phosphate dehydrogenase (NAD+) (phosphorylating) activity"/>
    <property type="evidence" value="ECO:0007669"/>
    <property type="project" value="UniProtKB-EC"/>
</dbReference>
<dbReference type="GO" id="GO:0051287">
    <property type="term" value="F:NAD binding"/>
    <property type="evidence" value="ECO:0007669"/>
    <property type="project" value="InterPro"/>
</dbReference>
<dbReference type="GO" id="GO:0050661">
    <property type="term" value="F:NADP binding"/>
    <property type="evidence" value="ECO:0007669"/>
    <property type="project" value="InterPro"/>
</dbReference>
<dbReference type="GO" id="GO:0006006">
    <property type="term" value="P:glucose metabolic process"/>
    <property type="evidence" value="ECO:0007669"/>
    <property type="project" value="InterPro"/>
</dbReference>
<dbReference type="GO" id="GO:0006096">
    <property type="term" value="P:glycolytic process"/>
    <property type="evidence" value="ECO:0007669"/>
    <property type="project" value="UniProtKB-UniPathway"/>
</dbReference>
<dbReference type="CDD" id="cd18126">
    <property type="entry name" value="GAPDH_I_C"/>
    <property type="match status" value="1"/>
</dbReference>
<dbReference type="CDD" id="cd05214">
    <property type="entry name" value="GAPDH_I_N"/>
    <property type="match status" value="1"/>
</dbReference>
<dbReference type="FunFam" id="3.30.360.10:FF:000001">
    <property type="entry name" value="Glyceraldehyde-3-phosphate dehydrogenase"/>
    <property type="match status" value="1"/>
</dbReference>
<dbReference type="FunFam" id="3.40.50.720:FF:000020">
    <property type="entry name" value="Glyceraldehyde-3-phosphate dehydrogenase"/>
    <property type="match status" value="1"/>
</dbReference>
<dbReference type="Gene3D" id="3.30.360.10">
    <property type="entry name" value="Dihydrodipicolinate Reductase, domain 2"/>
    <property type="match status" value="1"/>
</dbReference>
<dbReference type="Gene3D" id="3.40.50.720">
    <property type="entry name" value="NAD(P)-binding Rossmann-like Domain"/>
    <property type="match status" value="1"/>
</dbReference>
<dbReference type="InterPro" id="IPR020831">
    <property type="entry name" value="GlycerAld/Erythrose_P_DH"/>
</dbReference>
<dbReference type="InterPro" id="IPR020830">
    <property type="entry name" value="GlycerAld_3-P_DH_AS"/>
</dbReference>
<dbReference type="InterPro" id="IPR020829">
    <property type="entry name" value="GlycerAld_3-P_DH_cat"/>
</dbReference>
<dbReference type="InterPro" id="IPR020828">
    <property type="entry name" value="GlycerAld_3-P_DH_NAD(P)-bd"/>
</dbReference>
<dbReference type="InterPro" id="IPR006424">
    <property type="entry name" value="Glyceraldehyde-3-P_DH_1"/>
</dbReference>
<dbReference type="InterPro" id="IPR036291">
    <property type="entry name" value="NAD(P)-bd_dom_sf"/>
</dbReference>
<dbReference type="NCBIfam" id="TIGR01534">
    <property type="entry name" value="GAPDH-I"/>
    <property type="match status" value="1"/>
</dbReference>
<dbReference type="PANTHER" id="PTHR10836">
    <property type="entry name" value="GLYCERALDEHYDE 3-PHOSPHATE DEHYDROGENASE"/>
    <property type="match status" value="1"/>
</dbReference>
<dbReference type="PANTHER" id="PTHR10836:SF76">
    <property type="entry name" value="GLYCERALDEHYDE-3-PHOSPHATE DEHYDROGENASE-RELATED"/>
    <property type="match status" value="1"/>
</dbReference>
<dbReference type="Pfam" id="PF02800">
    <property type="entry name" value="Gp_dh_C"/>
    <property type="match status" value="1"/>
</dbReference>
<dbReference type="Pfam" id="PF00044">
    <property type="entry name" value="Gp_dh_N"/>
    <property type="match status" value="1"/>
</dbReference>
<dbReference type="PIRSF" id="PIRSF000149">
    <property type="entry name" value="GAP_DH"/>
    <property type="match status" value="1"/>
</dbReference>
<dbReference type="PRINTS" id="PR00078">
    <property type="entry name" value="G3PDHDRGNASE"/>
</dbReference>
<dbReference type="SMART" id="SM00846">
    <property type="entry name" value="Gp_dh_N"/>
    <property type="match status" value="1"/>
</dbReference>
<dbReference type="SUPFAM" id="SSF55347">
    <property type="entry name" value="Glyceraldehyde-3-phosphate dehydrogenase-like, C-terminal domain"/>
    <property type="match status" value="1"/>
</dbReference>
<dbReference type="SUPFAM" id="SSF51735">
    <property type="entry name" value="NAD(P)-binding Rossmann-fold domains"/>
    <property type="match status" value="1"/>
</dbReference>
<dbReference type="PROSITE" id="PS00071">
    <property type="entry name" value="GAPDH"/>
    <property type="match status" value="1"/>
</dbReference>